<gene>
    <name evidence="1" type="primary">ghrB</name>
    <name type="ordered locus">E2348C_3805</name>
</gene>
<feature type="chain" id="PRO_1000187282" description="Glyoxylate/hydroxypyruvate reductase B">
    <location>
        <begin position="1"/>
        <end position="324"/>
    </location>
</feature>
<feature type="active site" evidence="1">
    <location>
        <position position="237"/>
    </location>
</feature>
<feature type="active site" evidence="1">
    <location>
        <position position="266"/>
    </location>
</feature>
<feature type="active site" description="Proton donor" evidence="1">
    <location>
        <position position="285"/>
    </location>
</feature>
<evidence type="ECO:0000255" key="1">
    <source>
        <dbReference type="HAMAP-Rule" id="MF_01667"/>
    </source>
</evidence>
<protein>
    <recommendedName>
        <fullName evidence="1">Glyoxylate/hydroxypyruvate reductase B</fullName>
        <ecNumber evidence="1">1.1.1.79</ecNumber>
        <ecNumber evidence="1">1.1.1.81</ecNumber>
    </recommendedName>
</protein>
<name>GHRB_ECO27</name>
<sequence length="324" mass="35396">MKPSVILYKALPDDLLQRLQEHFTVHQVANLSPQTVEQNAAIFAEAEGLLGSNENVDAALLEKMPKLRATSTISVGYDNFDVDALTARKILLMHTPTVLTETVADTLMALVLSTARRVVEVAERVKAGEWTASIGPDWYGTDVHHKTLGIVGMGRIGMALAQRAHFGFNMPILYNARRHHKEAEERFNARYCDLDTLLQESDFVCLILPLTDETHHLFGAEQFAKMKSSAIFINAGRGPVVDENALIAALQKGEIHAAGLDVFEQEPLSVDSPLLSMANVVAVPHIGSATHETRYGMAACAVDNLIDALQGKVEKNCVNPHVAD</sequence>
<dbReference type="EC" id="1.1.1.79" evidence="1"/>
<dbReference type="EC" id="1.1.1.81" evidence="1"/>
<dbReference type="EMBL" id="FM180568">
    <property type="protein sequence ID" value="CAS11353.1"/>
    <property type="molecule type" value="Genomic_DNA"/>
</dbReference>
<dbReference type="RefSeq" id="WP_000805027.1">
    <property type="nucleotide sequence ID" value="NC_011601.1"/>
</dbReference>
<dbReference type="SMR" id="B7ULB4"/>
<dbReference type="GeneID" id="75203026"/>
<dbReference type="KEGG" id="ecg:E2348C_3805"/>
<dbReference type="HOGENOM" id="CLU_019796_1_2_6"/>
<dbReference type="Proteomes" id="UP000008205">
    <property type="component" value="Chromosome"/>
</dbReference>
<dbReference type="GO" id="GO:0005829">
    <property type="term" value="C:cytosol"/>
    <property type="evidence" value="ECO:0007669"/>
    <property type="project" value="UniProtKB-ARBA"/>
</dbReference>
<dbReference type="GO" id="GO:0005886">
    <property type="term" value="C:plasma membrane"/>
    <property type="evidence" value="ECO:0007669"/>
    <property type="project" value="UniProtKB-UniRule"/>
</dbReference>
<dbReference type="GO" id="GO:0030267">
    <property type="term" value="F:glyoxylate reductase (NADPH) activity"/>
    <property type="evidence" value="ECO:0007669"/>
    <property type="project" value="UniProtKB-UniRule"/>
</dbReference>
<dbReference type="GO" id="GO:0008465">
    <property type="term" value="F:hydroxypyruvate reductase (NADH) activity"/>
    <property type="evidence" value="ECO:0007669"/>
    <property type="project" value="RHEA"/>
</dbReference>
<dbReference type="GO" id="GO:0120509">
    <property type="term" value="F:hydroxypyruvate reductase (NADPH) activity"/>
    <property type="evidence" value="ECO:0007669"/>
    <property type="project" value="RHEA"/>
</dbReference>
<dbReference type="GO" id="GO:0051287">
    <property type="term" value="F:NAD binding"/>
    <property type="evidence" value="ECO:0007669"/>
    <property type="project" value="InterPro"/>
</dbReference>
<dbReference type="CDD" id="cd05301">
    <property type="entry name" value="GDH"/>
    <property type="match status" value="1"/>
</dbReference>
<dbReference type="FunFam" id="3.40.50.720:FF:000026">
    <property type="entry name" value="Glyoxylate/hydroxypyruvate reductase B"/>
    <property type="match status" value="1"/>
</dbReference>
<dbReference type="Gene3D" id="3.40.50.720">
    <property type="entry name" value="NAD(P)-binding Rossmann-like Domain"/>
    <property type="match status" value="2"/>
</dbReference>
<dbReference type="HAMAP" id="MF_01667">
    <property type="entry name" value="2_Hacid_dh_C_GhrB"/>
    <property type="match status" value="1"/>
</dbReference>
<dbReference type="InterPro" id="IPR050223">
    <property type="entry name" value="D-isomer_2-hydroxyacid_DH"/>
</dbReference>
<dbReference type="InterPro" id="IPR006139">
    <property type="entry name" value="D-isomer_2_OHA_DH_cat_dom"/>
</dbReference>
<dbReference type="InterPro" id="IPR029753">
    <property type="entry name" value="D-isomer_DH_CS"/>
</dbReference>
<dbReference type="InterPro" id="IPR006140">
    <property type="entry name" value="D-isomer_DH_NAD-bd"/>
</dbReference>
<dbReference type="InterPro" id="IPR023756">
    <property type="entry name" value="Glyo/OHPyrv_Rdtase_B"/>
</dbReference>
<dbReference type="InterPro" id="IPR036291">
    <property type="entry name" value="NAD(P)-bd_dom_sf"/>
</dbReference>
<dbReference type="NCBIfam" id="NF011938">
    <property type="entry name" value="PRK15409.1"/>
    <property type="match status" value="1"/>
</dbReference>
<dbReference type="PANTHER" id="PTHR10996">
    <property type="entry name" value="2-HYDROXYACID DEHYDROGENASE-RELATED"/>
    <property type="match status" value="1"/>
</dbReference>
<dbReference type="PANTHER" id="PTHR10996:SF283">
    <property type="entry name" value="GLYOXYLATE_HYDROXYPYRUVATE REDUCTASE B"/>
    <property type="match status" value="1"/>
</dbReference>
<dbReference type="Pfam" id="PF00389">
    <property type="entry name" value="2-Hacid_dh"/>
    <property type="match status" value="1"/>
</dbReference>
<dbReference type="Pfam" id="PF02826">
    <property type="entry name" value="2-Hacid_dh_C"/>
    <property type="match status" value="1"/>
</dbReference>
<dbReference type="SUPFAM" id="SSF52283">
    <property type="entry name" value="Formate/glycerate dehydrogenase catalytic domain-like"/>
    <property type="match status" value="1"/>
</dbReference>
<dbReference type="SUPFAM" id="SSF51735">
    <property type="entry name" value="NAD(P)-binding Rossmann-fold domains"/>
    <property type="match status" value="1"/>
</dbReference>
<dbReference type="PROSITE" id="PS00670">
    <property type="entry name" value="D_2_HYDROXYACID_DH_2"/>
    <property type="match status" value="1"/>
</dbReference>
<dbReference type="PROSITE" id="PS00671">
    <property type="entry name" value="D_2_HYDROXYACID_DH_3"/>
    <property type="match status" value="1"/>
</dbReference>
<reference key="1">
    <citation type="journal article" date="2009" name="J. Bacteriol.">
        <title>Complete genome sequence and comparative genome analysis of enteropathogenic Escherichia coli O127:H6 strain E2348/69.</title>
        <authorList>
            <person name="Iguchi A."/>
            <person name="Thomson N.R."/>
            <person name="Ogura Y."/>
            <person name="Saunders D."/>
            <person name="Ooka T."/>
            <person name="Henderson I.R."/>
            <person name="Harris D."/>
            <person name="Asadulghani M."/>
            <person name="Kurokawa K."/>
            <person name="Dean P."/>
            <person name="Kenny B."/>
            <person name="Quail M.A."/>
            <person name="Thurston S."/>
            <person name="Dougan G."/>
            <person name="Hayashi T."/>
            <person name="Parkhill J."/>
            <person name="Frankel G."/>
        </authorList>
    </citation>
    <scope>NUCLEOTIDE SEQUENCE [LARGE SCALE GENOMIC DNA]</scope>
    <source>
        <strain>E2348/69 / EPEC</strain>
    </source>
</reference>
<accession>B7ULB4</accession>
<comment type="function">
    <text evidence="1">Catalyzes the NADPH-dependent reduction of glyoxylate and hydroxypyruvate into glycolate and glycerate, respectively.</text>
</comment>
<comment type="catalytic activity">
    <reaction evidence="1">
        <text>glycolate + NADP(+) = glyoxylate + NADPH + H(+)</text>
        <dbReference type="Rhea" id="RHEA:10992"/>
        <dbReference type="ChEBI" id="CHEBI:15378"/>
        <dbReference type="ChEBI" id="CHEBI:29805"/>
        <dbReference type="ChEBI" id="CHEBI:36655"/>
        <dbReference type="ChEBI" id="CHEBI:57783"/>
        <dbReference type="ChEBI" id="CHEBI:58349"/>
        <dbReference type="EC" id="1.1.1.79"/>
    </reaction>
</comment>
<comment type="catalytic activity">
    <reaction evidence="1">
        <text>(R)-glycerate + NAD(+) = 3-hydroxypyruvate + NADH + H(+)</text>
        <dbReference type="Rhea" id="RHEA:17905"/>
        <dbReference type="ChEBI" id="CHEBI:15378"/>
        <dbReference type="ChEBI" id="CHEBI:16659"/>
        <dbReference type="ChEBI" id="CHEBI:17180"/>
        <dbReference type="ChEBI" id="CHEBI:57540"/>
        <dbReference type="ChEBI" id="CHEBI:57945"/>
        <dbReference type="EC" id="1.1.1.81"/>
    </reaction>
</comment>
<comment type="catalytic activity">
    <reaction evidence="1">
        <text>(R)-glycerate + NADP(+) = 3-hydroxypyruvate + NADPH + H(+)</text>
        <dbReference type="Rhea" id="RHEA:18657"/>
        <dbReference type="ChEBI" id="CHEBI:15378"/>
        <dbReference type="ChEBI" id="CHEBI:16659"/>
        <dbReference type="ChEBI" id="CHEBI:17180"/>
        <dbReference type="ChEBI" id="CHEBI:57783"/>
        <dbReference type="ChEBI" id="CHEBI:58349"/>
        <dbReference type="EC" id="1.1.1.81"/>
    </reaction>
</comment>
<comment type="subunit">
    <text evidence="1">Homodimer.</text>
</comment>
<comment type="subcellular location">
    <subcellularLocation>
        <location evidence="1">Cytoplasm</location>
    </subcellularLocation>
</comment>
<comment type="similarity">
    <text evidence="1">Belongs to the D-isomer specific 2-hydroxyacid dehydrogenase family. GhrB subfamily.</text>
</comment>
<keyword id="KW-0963">Cytoplasm</keyword>
<keyword id="KW-0520">NAD</keyword>
<keyword id="KW-0521">NADP</keyword>
<keyword id="KW-0560">Oxidoreductase</keyword>
<keyword id="KW-1185">Reference proteome</keyword>
<organism>
    <name type="scientific">Escherichia coli O127:H6 (strain E2348/69 / EPEC)</name>
    <dbReference type="NCBI Taxonomy" id="574521"/>
    <lineage>
        <taxon>Bacteria</taxon>
        <taxon>Pseudomonadati</taxon>
        <taxon>Pseudomonadota</taxon>
        <taxon>Gammaproteobacteria</taxon>
        <taxon>Enterobacterales</taxon>
        <taxon>Enterobacteriaceae</taxon>
        <taxon>Escherichia</taxon>
    </lineage>
</organism>
<proteinExistence type="inferred from homology"/>